<proteinExistence type="inferred from homology"/>
<gene>
    <name evidence="1" type="primary">recR</name>
    <name type="ordered locus">Noca_0319</name>
</gene>
<keyword id="KW-0227">DNA damage</keyword>
<keyword id="KW-0233">DNA recombination</keyword>
<keyword id="KW-0234">DNA repair</keyword>
<keyword id="KW-0479">Metal-binding</keyword>
<keyword id="KW-1185">Reference proteome</keyword>
<keyword id="KW-0862">Zinc</keyword>
<keyword id="KW-0863">Zinc-finger</keyword>
<name>RECR_NOCSJ</name>
<protein>
    <recommendedName>
        <fullName evidence="1">Recombination protein RecR</fullName>
    </recommendedName>
</protein>
<accession>A1SDH8</accession>
<organism>
    <name type="scientific">Nocardioides sp. (strain ATCC BAA-499 / JS614)</name>
    <dbReference type="NCBI Taxonomy" id="196162"/>
    <lineage>
        <taxon>Bacteria</taxon>
        <taxon>Bacillati</taxon>
        <taxon>Actinomycetota</taxon>
        <taxon>Actinomycetes</taxon>
        <taxon>Propionibacteriales</taxon>
        <taxon>Nocardioidaceae</taxon>
        <taxon>Nocardioides</taxon>
    </lineage>
</organism>
<comment type="function">
    <text evidence="1">May play a role in DNA repair. It seems to be involved in an RecBC-independent recombinational process of DNA repair. It may act with RecF and RecO.</text>
</comment>
<comment type="similarity">
    <text evidence="1">Belongs to the RecR family.</text>
</comment>
<sequence length="199" mass="21991">MYEGVVQDLIDELGRLPGVGPKGAQRIAFHLLQADPADVRRLADVLLEVKAKVKFCSICFNVSQDDQCRICRDPRRDPSVLCVVEEYKDVVAIERTREFRGRYHVLGGAISPIDGVGPEQLRIRELMVRLADGTITEVILATDPNLEGEATATYLTRMLKPLELRVTRLASGLPVGGDLEYADEVTLGRAFAGRRSADD</sequence>
<reference key="1">
    <citation type="submission" date="2006-12" db="EMBL/GenBank/DDBJ databases">
        <title>Complete sequence of chromosome 1 of Nocardioides sp. JS614.</title>
        <authorList>
            <person name="Copeland A."/>
            <person name="Lucas S."/>
            <person name="Lapidus A."/>
            <person name="Barry K."/>
            <person name="Detter J.C."/>
            <person name="Glavina del Rio T."/>
            <person name="Hammon N."/>
            <person name="Israni S."/>
            <person name="Dalin E."/>
            <person name="Tice H."/>
            <person name="Pitluck S."/>
            <person name="Thompson L.S."/>
            <person name="Brettin T."/>
            <person name="Bruce D."/>
            <person name="Han C."/>
            <person name="Tapia R."/>
            <person name="Schmutz J."/>
            <person name="Larimer F."/>
            <person name="Land M."/>
            <person name="Hauser L."/>
            <person name="Kyrpides N."/>
            <person name="Kim E."/>
            <person name="Mattes T."/>
            <person name="Gossett J."/>
            <person name="Richardson P."/>
        </authorList>
    </citation>
    <scope>NUCLEOTIDE SEQUENCE [LARGE SCALE GENOMIC DNA]</scope>
    <source>
        <strain>ATCC BAA-499 / JS614</strain>
    </source>
</reference>
<dbReference type="EMBL" id="CP000509">
    <property type="protein sequence ID" value="ABL79863.1"/>
    <property type="molecule type" value="Genomic_DNA"/>
</dbReference>
<dbReference type="RefSeq" id="WP_011753814.1">
    <property type="nucleotide sequence ID" value="NC_008699.1"/>
</dbReference>
<dbReference type="SMR" id="A1SDH8"/>
<dbReference type="STRING" id="196162.Noca_0319"/>
<dbReference type="KEGG" id="nca:Noca_0319"/>
<dbReference type="eggNOG" id="COG0353">
    <property type="taxonomic scope" value="Bacteria"/>
</dbReference>
<dbReference type="HOGENOM" id="CLU_060739_1_0_11"/>
<dbReference type="OrthoDB" id="9802672at2"/>
<dbReference type="Proteomes" id="UP000000640">
    <property type="component" value="Chromosome"/>
</dbReference>
<dbReference type="GO" id="GO:0003677">
    <property type="term" value="F:DNA binding"/>
    <property type="evidence" value="ECO:0007669"/>
    <property type="project" value="UniProtKB-UniRule"/>
</dbReference>
<dbReference type="GO" id="GO:0008270">
    <property type="term" value="F:zinc ion binding"/>
    <property type="evidence" value="ECO:0007669"/>
    <property type="project" value="UniProtKB-KW"/>
</dbReference>
<dbReference type="GO" id="GO:0006310">
    <property type="term" value="P:DNA recombination"/>
    <property type="evidence" value="ECO:0007669"/>
    <property type="project" value="UniProtKB-UniRule"/>
</dbReference>
<dbReference type="GO" id="GO:0006281">
    <property type="term" value="P:DNA repair"/>
    <property type="evidence" value="ECO:0007669"/>
    <property type="project" value="UniProtKB-UniRule"/>
</dbReference>
<dbReference type="CDD" id="cd01025">
    <property type="entry name" value="TOPRIM_recR"/>
    <property type="match status" value="1"/>
</dbReference>
<dbReference type="Gene3D" id="3.30.60.80">
    <property type="match status" value="1"/>
</dbReference>
<dbReference type="Gene3D" id="3.40.1360.10">
    <property type="match status" value="1"/>
</dbReference>
<dbReference type="Gene3D" id="6.10.250.240">
    <property type="match status" value="1"/>
</dbReference>
<dbReference type="Gene3D" id="1.10.8.420">
    <property type="entry name" value="RecR Domain 1"/>
    <property type="match status" value="1"/>
</dbReference>
<dbReference type="HAMAP" id="MF_00017">
    <property type="entry name" value="RecR"/>
    <property type="match status" value="1"/>
</dbReference>
<dbReference type="InterPro" id="IPR000093">
    <property type="entry name" value="DNA_Rcmb_RecR"/>
</dbReference>
<dbReference type="InterPro" id="IPR023627">
    <property type="entry name" value="Rcmb_RecR"/>
</dbReference>
<dbReference type="InterPro" id="IPR015967">
    <property type="entry name" value="Rcmb_RecR_Znf"/>
</dbReference>
<dbReference type="InterPro" id="IPR006171">
    <property type="entry name" value="TOPRIM_dom"/>
</dbReference>
<dbReference type="InterPro" id="IPR034137">
    <property type="entry name" value="TOPRIM_RecR"/>
</dbReference>
<dbReference type="NCBIfam" id="TIGR00615">
    <property type="entry name" value="recR"/>
    <property type="match status" value="1"/>
</dbReference>
<dbReference type="PANTHER" id="PTHR30446">
    <property type="entry name" value="RECOMBINATION PROTEIN RECR"/>
    <property type="match status" value="1"/>
</dbReference>
<dbReference type="PANTHER" id="PTHR30446:SF0">
    <property type="entry name" value="RECOMBINATION PROTEIN RECR"/>
    <property type="match status" value="1"/>
</dbReference>
<dbReference type="Pfam" id="PF21175">
    <property type="entry name" value="RecR_C"/>
    <property type="match status" value="1"/>
</dbReference>
<dbReference type="Pfam" id="PF21176">
    <property type="entry name" value="RecR_HhH"/>
    <property type="match status" value="1"/>
</dbReference>
<dbReference type="Pfam" id="PF02132">
    <property type="entry name" value="RecR_ZnF"/>
    <property type="match status" value="1"/>
</dbReference>
<dbReference type="Pfam" id="PF13662">
    <property type="entry name" value="Toprim_4"/>
    <property type="match status" value="1"/>
</dbReference>
<dbReference type="SMART" id="SM00493">
    <property type="entry name" value="TOPRIM"/>
    <property type="match status" value="1"/>
</dbReference>
<dbReference type="SUPFAM" id="SSF111304">
    <property type="entry name" value="Recombination protein RecR"/>
    <property type="match status" value="1"/>
</dbReference>
<dbReference type="PROSITE" id="PS01300">
    <property type="entry name" value="RECR"/>
    <property type="match status" value="1"/>
</dbReference>
<dbReference type="PROSITE" id="PS50880">
    <property type="entry name" value="TOPRIM"/>
    <property type="match status" value="1"/>
</dbReference>
<evidence type="ECO:0000255" key="1">
    <source>
        <dbReference type="HAMAP-Rule" id="MF_00017"/>
    </source>
</evidence>
<feature type="chain" id="PRO_0000322924" description="Recombination protein RecR">
    <location>
        <begin position="1"/>
        <end position="199"/>
    </location>
</feature>
<feature type="domain" description="Toprim" evidence="1">
    <location>
        <begin position="79"/>
        <end position="174"/>
    </location>
</feature>
<feature type="zinc finger region" description="C4-type" evidence="1">
    <location>
        <begin position="56"/>
        <end position="71"/>
    </location>
</feature>